<protein>
    <recommendedName>
        <fullName evidence="18">Tubulin gamma-1 chain</fullName>
    </recommendedName>
    <alternativeName>
        <fullName>Gamma-1-tubulin</fullName>
    </alternativeName>
    <alternativeName>
        <fullName>Gamma-tubulin complex component 1</fullName>
        <shortName>GCP-1</shortName>
    </alternativeName>
</protein>
<proteinExistence type="evidence at protein level"/>
<keyword id="KW-0002">3D-structure</keyword>
<keyword id="KW-0963">Cytoplasm</keyword>
<keyword id="KW-0206">Cytoskeleton</keyword>
<keyword id="KW-0225">Disease variant</keyword>
<keyword id="KW-0342">GTP-binding</keyword>
<keyword id="KW-0451">Lissencephaly</keyword>
<keyword id="KW-0493">Microtubule</keyword>
<keyword id="KW-0547">Nucleotide-binding</keyword>
<keyword id="KW-0597">Phosphoprotein</keyword>
<keyword id="KW-1267">Proteomics identification</keyword>
<keyword id="KW-1185">Reference proteome</keyword>
<feature type="chain" id="PRO_0000048465" description="Tubulin gamma-1 chain">
    <location>
        <begin position="1"/>
        <end position="451"/>
    </location>
</feature>
<feature type="binding site" evidence="4">
    <location>
        <begin position="142"/>
        <end position="148"/>
    </location>
    <ligand>
        <name>GTP</name>
        <dbReference type="ChEBI" id="CHEBI:37565"/>
    </ligand>
</feature>
<feature type="modified residue" description="Phosphoserine; by BRSK1" evidence="2">
    <location>
        <position position="131"/>
    </location>
</feature>
<feature type="sequence variant" id="VAR_070577" description="In CDCBM4; dbSNP:rs398123046." evidence="9">
    <original>Y</original>
    <variation>C</variation>
    <location>
        <position position="92"/>
    </location>
</feature>
<feature type="sequence variant" id="VAR_070578" description="In CDCBM4; dbSNP:rs398123047." evidence="9">
    <original>T</original>
    <variation>P</variation>
    <location>
        <position position="331"/>
    </location>
</feature>
<feature type="sequence variant" id="VAR_070579" description="In CDCBM4; the chaperonin-dependent folding and hence the yield of monomeric gamma-tubulin is compromised; dbSNP:rs398123045." evidence="9">
    <original>L</original>
    <variation>P</variation>
    <location>
        <position position="387"/>
    </location>
</feature>
<feature type="sequence variant" id="VAR_052674" description="In dbSNP:rs13663.">
    <original>M</original>
    <variation>V</variation>
    <location>
        <position position="413"/>
    </location>
</feature>
<feature type="sequence conflict" description="In Ref. 1; AAA52620." evidence="18" ref="1">
    <original>G</original>
    <variation>A</variation>
    <location>
        <position position="35"/>
    </location>
</feature>
<feature type="sequence conflict" description="In Ref. 1; AAA52620." evidence="18" ref="1">
    <original>V</original>
    <variation>L</variation>
    <location>
        <position position="202"/>
    </location>
</feature>
<feature type="strand" evidence="27">
    <location>
        <begin position="5"/>
        <end position="10"/>
    </location>
</feature>
<feature type="helix" evidence="27">
    <location>
        <begin position="11"/>
        <end position="28"/>
    </location>
</feature>
<feature type="strand" evidence="26">
    <location>
        <begin position="33"/>
        <end position="35"/>
    </location>
</feature>
<feature type="helix" evidence="27">
    <location>
        <begin position="48"/>
        <end position="50"/>
    </location>
</feature>
<feature type="strand" evidence="27">
    <location>
        <begin position="52"/>
        <end position="54"/>
    </location>
</feature>
<feature type="strand" evidence="27">
    <location>
        <begin position="60"/>
        <end position="62"/>
    </location>
</feature>
<feature type="strand" evidence="27">
    <location>
        <begin position="64"/>
        <end position="71"/>
    </location>
</feature>
<feature type="helix" evidence="27">
    <location>
        <begin position="72"/>
        <end position="79"/>
    </location>
</feature>
<feature type="turn" evidence="27">
    <location>
        <begin position="81"/>
        <end position="85"/>
    </location>
</feature>
<feature type="helix" evidence="27">
    <location>
        <begin position="88"/>
        <end position="90"/>
    </location>
</feature>
<feature type="strand" evidence="27">
    <location>
        <begin position="91"/>
        <end position="93"/>
    </location>
</feature>
<feature type="helix" evidence="27">
    <location>
        <begin position="104"/>
        <end position="127"/>
    </location>
</feature>
<feature type="strand" evidence="27">
    <location>
        <begin position="134"/>
        <end position="144"/>
    </location>
</feature>
<feature type="helix" evidence="27">
    <location>
        <begin position="145"/>
        <end position="160"/>
    </location>
</feature>
<feature type="strand" evidence="27">
    <location>
        <begin position="164"/>
        <end position="172"/>
    </location>
</feature>
<feature type="helix" evidence="27">
    <location>
        <begin position="184"/>
        <end position="197"/>
    </location>
</feature>
<feature type="strand" evidence="27">
    <location>
        <begin position="200"/>
        <end position="206"/>
    </location>
</feature>
<feature type="helix" evidence="27">
    <location>
        <begin position="207"/>
        <end position="216"/>
    </location>
</feature>
<feature type="helix" evidence="27">
    <location>
        <begin position="225"/>
        <end position="239"/>
    </location>
</feature>
<feature type="turn" evidence="27">
    <location>
        <begin position="240"/>
        <end position="243"/>
    </location>
</feature>
<feature type="strand" evidence="27">
    <location>
        <begin position="244"/>
        <end position="247"/>
    </location>
</feature>
<feature type="strand" evidence="26">
    <location>
        <begin position="248"/>
        <end position="250"/>
    </location>
</feature>
<feature type="helix" evidence="27">
    <location>
        <begin position="253"/>
        <end position="260"/>
    </location>
</feature>
<feature type="strand" evidence="26">
    <location>
        <begin position="262"/>
        <end position="265"/>
    </location>
</feature>
<feature type="strand" evidence="27">
    <location>
        <begin position="268"/>
        <end position="274"/>
    </location>
</feature>
<feature type="helix" evidence="27">
    <location>
        <begin position="290"/>
        <end position="296"/>
    </location>
</feature>
<feature type="helix" evidence="27">
    <location>
        <begin position="300"/>
        <end position="302"/>
    </location>
</feature>
<feature type="strand" evidence="27">
    <location>
        <begin position="303"/>
        <end position="305"/>
    </location>
</feature>
<feature type="strand" evidence="27">
    <location>
        <begin position="317"/>
        <end position="327"/>
    </location>
</feature>
<feature type="helix" evidence="27">
    <location>
        <begin position="330"/>
        <end position="342"/>
    </location>
</feature>
<feature type="strand" evidence="26">
    <location>
        <begin position="350"/>
        <end position="352"/>
    </location>
</feature>
<feature type="strand" evidence="27">
    <location>
        <begin position="356"/>
        <end position="361"/>
    </location>
</feature>
<feature type="strand" evidence="27">
    <location>
        <begin position="374"/>
        <end position="381"/>
    </location>
</feature>
<feature type="helix" evidence="27">
    <location>
        <begin position="382"/>
        <end position="384"/>
    </location>
</feature>
<feature type="helix" evidence="27">
    <location>
        <begin position="385"/>
        <end position="400"/>
    </location>
</feature>
<feature type="helix" evidence="27">
    <location>
        <begin position="406"/>
        <end position="409"/>
    </location>
</feature>
<feature type="helix" evidence="27">
    <location>
        <begin position="412"/>
        <end position="414"/>
    </location>
</feature>
<feature type="helix" evidence="27">
    <location>
        <begin position="419"/>
        <end position="437"/>
    </location>
</feature>
<feature type="helix" evidence="27">
    <location>
        <begin position="441"/>
        <end position="443"/>
    </location>
</feature>
<evidence type="ECO:0000250" key="1"/>
<evidence type="ECO:0000250" key="2">
    <source>
        <dbReference type="UniProtKB" id="P83887"/>
    </source>
</evidence>
<evidence type="ECO:0000250" key="3">
    <source>
        <dbReference type="UniProtKB" id="P83888"/>
    </source>
</evidence>
<evidence type="ECO:0000255" key="4"/>
<evidence type="ECO:0000269" key="5">
    <source>
    </source>
</evidence>
<evidence type="ECO:0000269" key="6">
    <source>
    </source>
</evidence>
<evidence type="ECO:0000269" key="7">
    <source>
    </source>
</evidence>
<evidence type="ECO:0000269" key="8">
    <source>
    </source>
</evidence>
<evidence type="ECO:0000269" key="9">
    <source>
    </source>
</evidence>
<evidence type="ECO:0000269" key="10">
    <source>
    </source>
</evidence>
<evidence type="ECO:0000269" key="11">
    <source>
    </source>
</evidence>
<evidence type="ECO:0000269" key="12">
    <source>
    </source>
</evidence>
<evidence type="ECO:0000269" key="13">
    <source>
    </source>
</evidence>
<evidence type="ECO:0000269" key="14">
    <source>
    </source>
</evidence>
<evidence type="ECO:0000269" key="15">
    <source>
    </source>
</evidence>
<evidence type="ECO:0000269" key="16">
    <source>
    </source>
</evidence>
<evidence type="ECO:0000269" key="17">
    <source>
    </source>
</evidence>
<evidence type="ECO:0000305" key="18"/>
<evidence type="ECO:0000312" key="19">
    <source>
        <dbReference type="HGNC" id="HGNC:12417"/>
    </source>
</evidence>
<evidence type="ECO:0007744" key="20">
    <source>
        <dbReference type="PDB" id="8Q62"/>
    </source>
</evidence>
<evidence type="ECO:0007744" key="21">
    <source>
        <dbReference type="PDB" id="8RX1"/>
    </source>
</evidence>
<evidence type="ECO:0007744" key="22">
    <source>
        <dbReference type="PDB" id="8VA2"/>
    </source>
</evidence>
<evidence type="ECO:0007744" key="23">
    <source>
        <dbReference type="PDB" id="8VRD"/>
    </source>
</evidence>
<evidence type="ECO:0007744" key="24">
    <source>
        <dbReference type="PDB" id="8VRJ"/>
    </source>
</evidence>
<evidence type="ECO:0007744" key="25">
    <source>
        <dbReference type="PDB" id="8VRK"/>
    </source>
</evidence>
<evidence type="ECO:0007829" key="26">
    <source>
        <dbReference type="PDB" id="1Z5V"/>
    </source>
</evidence>
<evidence type="ECO:0007829" key="27">
    <source>
        <dbReference type="PDB" id="3CB2"/>
    </source>
</evidence>
<reference key="1">
    <citation type="journal article" date="1991" name="Cell">
        <title>Gamma-tubulin is present in Drosophila melanogaster and Homo sapiens and is associated with the centrosome.</title>
        <authorList>
            <person name="Zheng Y."/>
            <person name="Jung M.K."/>
            <person name="Oakley B.R."/>
        </authorList>
    </citation>
    <scope>NUCLEOTIDE SEQUENCE [MRNA]</scope>
</reference>
<reference key="2">
    <citation type="submission" date="2004-10" db="EMBL/GenBank/DDBJ databases">
        <title>Cloning of human full-length CDSs in BD Creator(TM) system donor vector.</title>
        <authorList>
            <person name="Kalnine N."/>
            <person name="Chen X."/>
            <person name="Rolfs A."/>
            <person name="Halleck A."/>
            <person name="Hines L."/>
            <person name="Eisenstein S."/>
            <person name="Koundinya M."/>
            <person name="Raphael J."/>
            <person name="Moreira D."/>
            <person name="Kelley T."/>
            <person name="LaBaer J."/>
            <person name="Lin Y."/>
            <person name="Phelan M."/>
            <person name="Farmer A."/>
        </authorList>
    </citation>
    <scope>NUCLEOTIDE SEQUENCE [LARGE SCALE MRNA]</scope>
</reference>
<reference key="3">
    <citation type="submission" date="2004-05" db="EMBL/GenBank/DDBJ databases">
        <title>Cloning of human full open reading frames in Gateway(TM) system entry vector (pDONR201).</title>
        <authorList>
            <person name="Ebert L."/>
            <person name="Schick M."/>
            <person name="Neubert P."/>
            <person name="Schatten R."/>
            <person name="Henze S."/>
            <person name="Korn B."/>
        </authorList>
    </citation>
    <scope>NUCLEOTIDE SEQUENCE [LARGE SCALE MRNA]</scope>
</reference>
<reference key="4">
    <citation type="journal article" date="2004" name="Nat. Genet.">
        <title>Complete sequencing and characterization of 21,243 full-length human cDNAs.</title>
        <authorList>
            <person name="Ota T."/>
            <person name="Suzuki Y."/>
            <person name="Nishikawa T."/>
            <person name="Otsuki T."/>
            <person name="Sugiyama T."/>
            <person name="Irie R."/>
            <person name="Wakamatsu A."/>
            <person name="Hayashi K."/>
            <person name="Sato H."/>
            <person name="Nagai K."/>
            <person name="Kimura K."/>
            <person name="Makita H."/>
            <person name="Sekine M."/>
            <person name="Obayashi M."/>
            <person name="Nishi T."/>
            <person name="Shibahara T."/>
            <person name="Tanaka T."/>
            <person name="Ishii S."/>
            <person name="Yamamoto J."/>
            <person name="Saito K."/>
            <person name="Kawai Y."/>
            <person name="Isono Y."/>
            <person name="Nakamura Y."/>
            <person name="Nagahari K."/>
            <person name="Murakami K."/>
            <person name="Yasuda T."/>
            <person name="Iwayanagi T."/>
            <person name="Wagatsuma M."/>
            <person name="Shiratori A."/>
            <person name="Sudo H."/>
            <person name="Hosoiri T."/>
            <person name="Kaku Y."/>
            <person name="Kodaira H."/>
            <person name="Kondo H."/>
            <person name="Sugawara M."/>
            <person name="Takahashi M."/>
            <person name="Kanda K."/>
            <person name="Yokoi T."/>
            <person name="Furuya T."/>
            <person name="Kikkawa E."/>
            <person name="Omura Y."/>
            <person name="Abe K."/>
            <person name="Kamihara K."/>
            <person name="Katsuta N."/>
            <person name="Sato K."/>
            <person name="Tanikawa M."/>
            <person name="Yamazaki M."/>
            <person name="Ninomiya K."/>
            <person name="Ishibashi T."/>
            <person name="Yamashita H."/>
            <person name="Murakawa K."/>
            <person name="Fujimori K."/>
            <person name="Tanai H."/>
            <person name="Kimata M."/>
            <person name="Watanabe M."/>
            <person name="Hiraoka S."/>
            <person name="Chiba Y."/>
            <person name="Ishida S."/>
            <person name="Ono Y."/>
            <person name="Takiguchi S."/>
            <person name="Watanabe S."/>
            <person name="Yosida M."/>
            <person name="Hotuta T."/>
            <person name="Kusano J."/>
            <person name="Kanehori K."/>
            <person name="Takahashi-Fujii A."/>
            <person name="Hara H."/>
            <person name="Tanase T.-O."/>
            <person name="Nomura Y."/>
            <person name="Togiya S."/>
            <person name="Komai F."/>
            <person name="Hara R."/>
            <person name="Takeuchi K."/>
            <person name="Arita M."/>
            <person name="Imose N."/>
            <person name="Musashino K."/>
            <person name="Yuuki H."/>
            <person name="Oshima A."/>
            <person name="Sasaki N."/>
            <person name="Aotsuka S."/>
            <person name="Yoshikawa Y."/>
            <person name="Matsunawa H."/>
            <person name="Ichihara T."/>
            <person name="Shiohata N."/>
            <person name="Sano S."/>
            <person name="Moriya S."/>
            <person name="Momiyama H."/>
            <person name="Satoh N."/>
            <person name="Takami S."/>
            <person name="Terashima Y."/>
            <person name="Suzuki O."/>
            <person name="Nakagawa S."/>
            <person name="Senoh A."/>
            <person name="Mizoguchi H."/>
            <person name="Goto Y."/>
            <person name="Shimizu F."/>
            <person name="Wakebe H."/>
            <person name="Hishigaki H."/>
            <person name="Watanabe T."/>
            <person name="Sugiyama A."/>
            <person name="Takemoto M."/>
            <person name="Kawakami B."/>
            <person name="Yamazaki M."/>
            <person name="Watanabe K."/>
            <person name="Kumagai A."/>
            <person name="Itakura S."/>
            <person name="Fukuzumi Y."/>
            <person name="Fujimori Y."/>
            <person name="Komiyama M."/>
            <person name="Tashiro H."/>
            <person name="Tanigami A."/>
            <person name="Fujiwara T."/>
            <person name="Ono T."/>
            <person name="Yamada K."/>
            <person name="Fujii Y."/>
            <person name="Ozaki K."/>
            <person name="Hirao M."/>
            <person name="Ohmori Y."/>
            <person name="Kawabata A."/>
            <person name="Hikiji T."/>
            <person name="Kobatake N."/>
            <person name="Inagaki H."/>
            <person name="Ikema Y."/>
            <person name="Okamoto S."/>
            <person name="Okitani R."/>
            <person name="Kawakami T."/>
            <person name="Noguchi S."/>
            <person name="Itoh T."/>
            <person name="Shigeta K."/>
            <person name="Senba T."/>
            <person name="Matsumura K."/>
            <person name="Nakajima Y."/>
            <person name="Mizuno T."/>
            <person name="Morinaga M."/>
            <person name="Sasaki M."/>
            <person name="Togashi T."/>
            <person name="Oyama M."/>
            <person name="Hata H."/>
            <person name="Watanabe M."/>
            <person name="Komatsu T."/>
            <person name="Mizushima-Sugano J."/>
            <person name="Satoh T."/>
            <person name="Shirai Y."/>
            <person name="Takahashi Y."/>
            <person name="Nakagawa K."/>
            <person name="Okumura K."/>
            <person name="Nagase T."/>
            <person name="Nomura N."/>
            <person name="Kikuchi H."/>
            <person name="Masuho Y."/>
            <person name="Yamashita R."/>
            <person name="Nakai K."/>
            <person name="Yada T."/>
            <person name="Nakamura Y."/>
            <person name="Ohara O."/>
            <person name="Isogai T."/>
            <person name="Sugano S."/>
        </authorList>
    </citation>
    <scope>NUCLEOTIDE SEQUENCE [LARGE SCALE MRNA]</scope>
    <source>
        <tissue>Testis</tissue>
    </source>
</reference>
<reference key="5">
    <citation type="journal article" date="2004" name="Genome Res.">
        <title>The status, quality, and expansion of the NIH full-length cDNA project: the Mammalian Gene Collection (MGC).</title>
        <authorList>
            <consortium name="The MGC Project Team"/>
        </authorList>
    </citation>
    <scope>NUCLEOTIDE SEQUENCE [LARGE SCALE MRNA]</scope>
    <source>
        <tissue>Skin</tissue>
    </source>
</reference>
<reference key="6">
    <citation type="journal article" date="2002" name="Proteomics">
        <title>Cluster analysis of an extensive human breast cancer cell line protein expression map database.</title>
        <authorList>
            <person name="Harris R.A."/>
            <person name="Yang A."/>
            <person name="Stein R.C."/>
            <person name="Lucy K."/>
            <person name="Brusten L."/>
            <person name="Herath A."/>
            <person name="Parekh R."/>
            <person name="Waterfield M.D."/>
            <person name="O'Hare M.J."/>
            <person name="Neville M.A."/>
            <person name="Page M.J."/>
            <person name="Zvelebil M.J."/>
        </authorList>
    </citation>
    <scope>MASS SPECTROMETRY</scope>
    <source>
        <tissue>Mammary cancer</tissue>
    </source>
</reference>
<reference key="7">
    <citation type="journal article" date="1998" name="J. Cell Biol.">
        <title>The mammalian gamma-tubulin complex contains homologues of the yeast spindle pole body components spc97p and spc98p.</title>
        <authorList>
            <person name="Murphy S.M."/>
            <person name="Urbani L."/>
            <person name="Stearns T."/>
        </authorList>
    </citation>
    <scope>INTERACTION WITH TUBGCP2 AND TUBGCP3</scope>
    <scope>SUBCELLULAR LOCATION</scope>
</reference>
<reference key="8">
    <citation type="journal article" date="1998" name="J. Cell Biol.">
        <title>Characterization of the human homologue of the yeast spc98p and its association with gamma-tubulin.</title>
        <authorList>
            <person name="Tassin A.-M."/>
            <person name="Celati C."/>
            <person name="Moudjou M."/>
            <person name="Bornens M."/>
        </authorList>
    </citation>
    <scope>INTERACTION WITH TUBGCP2</scope>
    <scope>SUBCELLULAR LOCATION</scope>
</reference>
<reference key="9">
    <citation type="journal article" date="2003" name="Nature">
        <title>Proteomic characterization of the human centrosome by protein correlation profiling.</title>
        <authorList>
            <person name="Andersen J.S."/>
            <person name="Wilkinson C.J."/>
            <person name="Mayor T."/>
            <person name="Mortensen P."/>
            <person name="Nigg E.A."/>
            <person name="Mann M."/>
        </authorList>
    </citation>
    <scope>IDENTIFICATION BY MASS SPECTROMETRY</scope>
    <scope>SUBCELLULAR LOCATION [LARGE SCALE ANALYSIS]</scope>
    <source>
        <tissue>Lymphoblast</tissue>
    </source>
</reference>
<reference key="10">
    <citation type="journal article" date="2008" name="Mol. Biol. Cell">
        <title>CDK5RAP2 is a pericentriolar protein that functions in centrosomal attachment of the gamma-tubulin ring complex.</title>
        <authorList>
            <person name="Fong K.W."/>
            <person name="Choi Y.K."/>
            <person name="Rattner J.B."/>
            <person name="Qi R.Z."/>
        </authorList>
    </citation>
    <scope>INTERACTION WITH CDK5RAP2</scope>
</reference>
<reference key="11">
    <citation type="journal article" date="2010" name="Dev. Cell">
        <title>Pitchfork regulates primary cilia disassembly and left-right asymmetry.</title>
        <authorList>
            <person name="Kinzel D."/>
            <person name="Boldt K."/>
            <person name="Davis E.E."/>
            <person name="Burtscher I."/>
            <person name="Trumbach D."/>
            <person name="Diplas B."/>
            <person name="Attie-Bitach T."/>
            <person name="Wurst W."/>
            <person name="Katsanis N."/>
            <person name="Ueffing M."/>
            <person name="Lickert H."/>
        </authorList>
    </citation>
    <scope>INTERACTION WITH CIMAP3</scope>
</reference>
<reference key="12">
    <citation type="journal article" date="2011" name="BMC Syst. Biol.">
        <title>Initial characterization of the human central proteome.</title>
        <authorList>
            <person name="Burkard T.R."/>
            <person name="Planyavsky M."/>
            <person name="Kaupe I."/>
            <person name="Breitwieser F.P."/>
            <person name="Buerckstuemmer T."/>
            <person name="Bennett K.L."/>
            <person name="Superti-Furga G."/>
            <person name="Colinge J."/>
        </authorList>
    </citation>
    <scope>IDENTIFICATION BY MASS SPECTROMETRY [LARGE SCALE ANALYSIS]</scope>
</reference>
<reference key="13">
    <citation type="journal article" date="2013" name="Cell Cycle">
        <title>Nucleoporin Nup62 maintains centrosome homeostasis.</title>
        <authorList>
            <person name="Hashizume C."/>
            <person name="Moyori A."/>
            <person name="Kobayashi A."/>
            <person name="Yamakoshi N."/>
            <person name="Endo A."/>
            <person name="Wong R.W."/>
        </authorList>
    </citation>
    <scope>INTERACTION WITH SAS6 AND NUP62</scope>
    <scope>SUBCELLULAR LOCATION</scope>
</reference>
<reference key="14">
    <citation type="journal article" date="2019" name="J. Biol. Chem.">
        <title>The microtubule-associated protein EML3 regulates mitotic spindle assembly by recruiting the Augmin complex to spindle microtubules.</title>
        <authorList>
            <person name="Luo J."/>
            <person name="Yang B."/>
            <person name="Xin G."/>
            <person name="Sun M."/>
            <person name="Zhang B."/>
            <person name="Guo X."/>
            <person name="Jiang Q."/>
            <person name="Zhang C."/>
        </authorList>
    </citation>
    <scope>INTERACTION WITH EML3 AND HAUS8</scope>
    <scope>SUBCELLULAR LOCATION</scope>
</reference>
<reference key="15">
    <citation type="journal article" date="2022" name="PLoS Biol.">
        <title>The ciliopathy protein CCDC66 controls mitotic progression and cytokinesis by promoting microtubule nucleation and organization.</title>
        <authorList>
            <person name="Batman U."/>
            <person name="Deretic J."/>
            <person name="Firat-Karalar E.N."/>
        </authorList>
    </citation>
    <scope>SUBCELLULAR LOCATION</scope>
    <scope>INTERACTION WITH CCDC66</scope>
</reference>
<reference key="16">
    <citation type="journal article" date="2013" name="Nat. Genet.">
        <title>Mutations in TUBG1, DYNC1H1, KIF5C and KIF2A cause malformations of cortical development and microcephaly.</title>
        <authorList>
            <person name="Poirier K."/>
            <person name="Lebrun N."/>
            <person name="Broix L."/>
            <person name="Tian G."/>
            <person name="Saillour Y."/>
            <person name="Boscheron C."/>
            <person name="Parrini E."/>
            <person name="Valence S."/>
            <person name="Pierre B.S."/>
            <person name="Oger M."/>
            <person name="Lacombe D."/>
            <person name="Genevieve D."/>
            <person name="Fontana E."/>
            <person name="Darra F."/>
            <person name="Cances C."/>
            <person name="Barth M."/>
            <person name="Bonneau D."/>
            <person name="Bernadina B.D."/>
            <person name="N'guyen S."/>
            <person name="Gitiaux C."/>
            <person name="Parent P."/>
            <person name="des Portes V."/>
            <person name="Pedespan J.M."/>
            <person name="Legrez V."/>
            <person name="Castelnau-Ptakine L."/>
            <person name="Nitschke P."/>
            <person name="Hieu T."/>
            <person name="Masson C."/>
            <person name="Zelenika D."/>
            <person name="Andrieux A."/>
            <person name="Francis F."/>
            <person name="Guerrini R."/>
            <person name="Cowan N.J."/>
            <person name="Bahi-Buisson N."/>
            <person name="Chelly J."/>
        </authorList>
    </citation>
    <scope>VARIANTS CDCBM4 CYS-92; PRO-331 AND PRO-387</scope>
    <scope>CHARACTERIZATION OF VARIANT CDCBM4 PRO-387</scope>
</reference>
<reference evidence="21" key="17">
    <citation type="journal article" date="2024" name="Dev. Cell">
        <title>CDK5RAP2 activates microtubule nucleator gammaTuRC by facilitating template formation and actin release.</title>
        <authorList>
            <person name="Serna M."/>
            <person name="Zimmermann F."/>
            <person name="Vineethakumari C."/>
            <person name="Gonzalez-Rodriguez N."/>
            <person name="Llorca O."/>
            <person name="Luders J."/>
        </authorList>
    </citation>
    <scope>STRUCTURE BY ELECTRON MICROSCOPY (3.57 ANGSTROMS) OF THE GAMMA-TUBULIN RING COMPLEX IN COMPLEX WITH MZT1; MZT2A; CDK5RAP2 AND ACTB</scope>
    <scope>FUNCTION</scope>
    <scope>SUBUNIT</scope>
</reference>
<reference evidence="22 23 24 25" key="18">
    <citation type="journal article" date="2024" name="Nat. Struct. Mol. Biol.">
        <title>Structure of the gamma-tubulin ring complex-capped microtubule.</title>
        <authorList>
            <person name="Aher A."/>
            <person name="Urnavicius L."/>
            <person name="Xue A."/>
            <person name="Neselu K."/>
            <person name="Kapoor T.M."/>
        </authorList>
    </citation>
    <scope>STRUCTURE BY ELECTRON MICROSCOPY (4.50 ANGSTROMS) OF THE GAMMA-TUBULIN RING COMPLEX IN COMPLEX WITH MZT1; ACTB; TUBA1B AND TUBB3</scope>
    <scope>FUNCTION</scope>
    <scope>SUBUNIT</scope>
</reference>
<reference evidence="20" key="19">
    <citation type="journal article" date="2024" name="Science">
        <title>Transition of human gamma-tubulin ring complex into a closed conformation during microtubule nucleation.</title>
        <authorList>
            <person name="Brito C."/>
            <person name="Serna M."/>
            <person name="Guerra P."/>
            <person name="Llorca O."/>
            <person name="Surrey T."/>
        </authorList>
    </citation>
    <scope>STRUCTURE BY ELECTRON MICROSCOPY (3.72 ANGSTROMS) OF THE GAMMA-TUBULIN RING COMPLEX</scope>
    <scope>FUNCTION</scope>
    <scope>SUBUNIT</scope>
</reference>
<accession>P23258</accession>
<accession>Q53X79</accession>
<accession>Q9BW59</accession>
<comment type="function">
    <text evidence="13 14 15">Tubulin is the major constituent of microtubules, protein filaments consisting of alpha- and beta-tubulin heterodimers (PubMed:38305685, PubMed:38609661, PubMed:39321809). Gamma-tubulin is a key component of the gamma-tubulin ring complex (gTuRC) which mediates microtubule nucleation (PubMed:38305685, PubMed:38609661, PubMed:39321809). The gTuRC regulates the minus-end nucleation of alpha-beta tubulin heterodimers that grow into microtubule protafilaments, a critical step in centrosome duplication and spindle formation (PubMed:38305685, PubMed:38609661, PubMed:39321809).</text>
</comment>
<comment type="subunit">
    <text evidence="2 3 7 8 10 11 12 13 14 15 16 17">Component of the gamma-tubulin ring complex (gTuRC) consisting of TUBGCP2, TUBGCP3, TUBGCP4, TUBGCP5 and TUBGCP6 and gamma-tubulin TUBG1 or TUBG2 (PubMed:9566969, PubMed:39321809, PubMed:38609661, PubMed:38305685). TUBGCP2, TUBGCP3, TUBGCP4, TUBGCP5 and TUBGCP6 assemble in a 5:5:2:1:1 stoichiometry; each is associated with a gamma-tubulin, thereby arranging 14 gamma-tubulins in a helical manner (PubMed:39321809, PubMed:38609661, PubMed:38305685). Gamma-tubulin at the first position is blocked by TUBGCP3 at the last position, allowing 13 protafilaments to grow into a microtubule (PubMed:39321809, PubMed:38609661, PubMed:38305685). The gTuRC (via TUBGCP3 and TUBGCP6) interacts with ACTB and MZT1; the interactions form a luminal bridge that stabilizes the initial structure during complex assembly (PubMed:39321809, PubMed:38609661). The gTuRC (via TUBGCP2) interacts with MZT2A/MZT2B and CDK5RAP2 (via CM1 motif); the interactions play a role in gTuRC activation (PubMed:39321809). Interacts with alpha-beta tubulin heterodimers; the interaction allows microtubules to nucleate from the gTuRC (PubMed:39321809, PubMed:38609661, PubMed:38305685). Interacts with B9D2 (By similarity). Interacts with CDK5RAP2; the interaction is leading to centrosomal localization of TUBG1 and CDK5RAP2 (PubMed:17959831). Interacts with CIMAP3 (PubMed:20643351). Interacts with SAS6 and NUP62 at the centrosome (PubMed:24107630). Interacts with EML3 (phosphorylated at 'Thr-881') and HAUS8 (PubMed:30723163). Interacts with DNM2; this interaction may participate in centrosome cohesion (By similarity). Interacts with CCDC66 (PubMed:35849559).</text>
</comment>
<comment type="interaction">
    <interactant intactId="EBI-302589">
        <id>P23258</id>
    </interactant>
    <interactant intactId="EBI-710484">
        <id>O15169</id>
        <label>AXIN1</label>
    </interactant>
    <organismsDiffer>false</organismsDiffer>
    <experiments>4</experiments>
</comment>
<comment type="interaction">
    <interactant intactId="EBI-302589">
        <id>P23258</id>
    </interactant>
    <interactant intactId="EBI-302319">
        <id>Q96L34</id>
        <label>MARK4</label>
    </interactant>
    <organismsDiffer>false</organismsDiffer>
    <experiments>4</experiments>
</comment>
<comment type="interaction">
    <interactant intactId="EBI-302589">
        <id>P23258</id>
    </interactant>
    <interactant intactId="EBI-2637198">
        <id>Q08AG7</id>
        <label>MZT1</label>
    </interactant>
    <organismsDiffer>false</organismsDiffer>
    <experiments>5</experiments>
</comment>
<comment type="interaction">
    <interactant intactId="EBI-302589">
        <id>P23258</id>
    </interactant>
    <interactant intactId="EBI-1052566">
        <id>Q6NZ67</id>
        <label>MZT2B</label>
    </interactant>
    <organismsDiffer>false</organismsDiffer>
    <experiments>5</experiments>
</comment>
<comment type="interaction">
    <interactant intactId="EBI-302589">
        <id>P23258</id>
    </interactant>
    <interactant intactId="EBI-302589">
        <id>P23258</id>
        <label>TUBG1</label>
    </interactant>
    <organismsDiffer>false</organismsDiffer>
    <experiments>7</experiments>
</comment>
<comment type="interaction">
    <interactant intactId="EBI-302589">
        <id>P23258</id>
    </interactant>
    <interactant intactId="EBI-10964469">
        <id>Q9UGJ1-2</id>
        <label>TUBGCP4</label>
    </interactant>
    <organismsDiffer>false</organismsDiffer>
    <experiments>2</experiments>
</comment>
<comment type="subcellular location">
    <subcellularLocation>
        <location evidence="6 10 12 16 17">Cytoplasm</location>
        <location evidence="6 10 12 16 17">Cytoskeleton</location>
        <location evidence="6 10 12 16 17">Microtubule organizing center</location>
        <location evidence="6 10 12 16 17">Centrosome</location>
    </subcellularLocation>
    <subcellularLocation>
        <location evidence="11">Cytoplasm</location>
        <location evidence="11">Cytoskeleton</location>
        <location evidence="11">Spindle</location>
    </subcellularLocation>
    <text evidence="11">Localizes to mitotic spindle microtubules.</text>
</comment>
<comment type="PTM">
    <text evidence="1">Phosphorylation at Ser-131 by BRSK1 regulates centrosome duplication, possibly by mediating relocation of gamma-tubulin and its associated proteins from the cytoplasm to the centrosome.</text>
</comment>
<comment type="mass spectrometry"/>
<comment type="disease" evidence="9">
    <disease id="DI-03885">
        <name>Cortical dysplasia, complex, with other brain malformations 4</name>
        <acronym>CDCBM4</acronym>
        <description>A disorder of aberrant neuronal migration and disturbed axonal guidance. Clinical features include early-onset seizures, microcephaly, spastic tetraplegia, and various malformations of cortical development, such as agyria, posterior or frontal pachygyria, thick cortex, and subcortical band heterotopia and thin corpus callosum in some patients.</description>
        <dbReference type="MIM" id="615412"/>
    </disease>
    <text>The disease is caused by variants affecting the gene represented in this entry.</text>
</comment>
<comment type="similarity">
    <text evidence="18">Belongs to the tubulin family.</text>
</comment>
<organism>
    <name type="scientific">Homo sapiens</name>
    <name type="common">Human</name>
    <dbReference type="NCBI Taxonomy" id="9606"/>
    <lineage>
        <taxon>Eukaryota</taxon>
        <taxon>Metazoa</taxon>
        <taxon>Chordata</taxon>
        <taxon>Craniata</taxon>
        <taxon>Vertebrata</taxon>
        <taxon>Euteleostomi</taxon>
        <taxon>Mammalia</taxon>
        <taxon>Eutheria</taxon>
        <taxon>Euarchontoglires</taxon>
        <taxon>Primates</taxon>
        <taxon>Haplorrhini</taxon>
        <taxon>Catarrhini</taxon>
        <taxon>Hominidae</taxon>
        <taxon>Homo</taxon>
    </lineage>
</organism>
<sequence>MPREIITLQLGQCGNQIGFEFWKQLCAEHGISPEGIVEEFATEGTDRKDVFFYQADDEHYIPRAVLLDLEPRVIHSILNSPYAKLYNPENIYLSEHGGGAGNNWASGFSQGEKIHEDIFDIIDREADGSDSLEGFVLCHSIAGGTGSGLGSYLLERLNDRYPKKLVQTYSVFPNQDEMSDVVVQPYNSLLTLKRLTQNADCVVVLDNTALNRIATDRLHIQNPSFSQINQLVSTIMSASTTTLRYPGYMNNDLIGLIASLIPTPRLHFLMTGYTPLTTDQSVASVRKTTVLDVMRRLLQPKNVMVSTGRDRQTNHCYIAILNIIQGEVDPTQVHKSLQRIRERKLANFIPWGPASIQVALSRKSPYLPSAHRVSGLMMANHTSISSLFERTCRQYDKLRKREAFLEQFRKEDMFKDNFDEMDTSREIVQQLIDEYHAATRPDYISWGTQEQ</sequence>
<gene>
    <name evidence="19" type="primary">TUBG1</name>
    <name type="synonym">TUBG</name>
</gene>
<name>TBG1_HUMAN</name>
<dbReference type="EMBL" id="M61764">
    <property type="protein sequence ID" value="AAA52620.1"/>
    <property type="molecule type" value="mRNA"/>
</dbReference>
<dbReference type="EMBL" id="BT019931">
    <property type="protein sequence ID" value="AAV38734.1"/>
    <property type="molecule type" value="mRNA"/>
</dbReference>
<dbReference type="EMBL" id="CR407642">
    <property type="protein sequence ID" value="CAG28570.1"/>
    <property type="molecule type" value="mRNA"/>
</dbReference>
<dbReference type="EMBL" id="AK313339">
    <property type="protein sequence ID" value="BAG36143.1"/>
    <property type="molecule type" value="mRNA"/>
</dbReference>
<dbReference type="EMBL" id="BC000619">
    <property type="protein sequence ID" value="AAH00619.1"/>
    <property type="molecule type" value="mRNA"/>
</dbReference>
<dbReference type="CCDS" id="CCDS11433.1"/>
<dbReference type="PIR" id="A39527">
    <property type="entry name" value="UBHUG"/>
</dbReference>
<dbReference type="RefSeq" id="NP_001061.2">
    <property type="nucleotide sequence ID" value="NM_001070.4"/>
</dbReference>
<dbReference type="PDB" id="1Z5V">
    <property type="method" value="X-ray"/>
    <property type="resolution" value="2.71 A"/>
    <property type="chains" value="A=1-449"/>
</dbReference>
<dbReference type="PDB" id="1Z5W">
    <property type="method" value="X-ray"/>
    <property type="resolution" value="3.00 A"/>
    <property type="chains" value="A=1-449"/>
</dbReference>
<dbReference type="PDB" id="3CB2">
    <property type="method" value="X-ray"/>
    <property type="resolution" value="2.30 A"/>
    <property type="chains" value="A/B=1-451"/>
</dbReference>
<dbReference type="PDB" id="6V5V">
    <property type="method" value="EM"/>
    <property type="resolution" value="3.80 A"/>
    <property type="chains" value="g=1-451"/>
</dbReference>
<dbReference type="PDB" id="6V6S">
    <property type="method" value="EM"/>
    <property type="resolution" value="4.30 A"/>
    <property type="chains" value="a/b/c/d/e/f/g/h/i/j/k/l/m/t=1-451"/>
</dbReference>
<dbReference type="PDB" id="7AS4">
    <property type="method" value="EM"/>
    <property type="resolution" value="4.13 A"/>
    <property type="chains" value="1/2/O/P/Q/R/S/T/U/V/W/X/Y/Z=1-447"/>
</dbReference>
<dbReference type="PDB" id="7QJ0">
    <property type="method" value="EM"/>
    <property type="resolution" value="5.32 A"/>
    <property type="chains" value="U/V/W/X/Y/Z=1-451"/>
</dbReference>
<dbReference type="PDB" id="7QJ1">
    <property type="method" value="EM"/>
    <property type="resolution" value="7.00 A"/>
    <property type="chains" value="U/V/W/X/Y/Z=1-451"/>
</dbReference>
<dbReference type="PDB" id="7QJ2">
    <property type="method" value="EM"/>
    <property type="resolution" value="8.60 A"/>
    <property type="chains" value="S/T/U/V/W/X/Y/Z=1-451"/>
</dbReference>
<dbReference type="PDB" id="7QJ3">
    <property type="method" value="EM"/>
    <property type="resolution" value="7.60 A"/>
    <property type="chains" value="1/2/U/V/W/X/Y/Z=1-451"/>
</dbReference>
<dbReference type="PDB" id="7QJ4">
    <property type="method" value="EM"/>
    <property type="resolution" value="9.00 A"/>
    <property type="chains" value="1/2/S/T/U/V/W/X/Y/Z=1-451"/>
</dbReference>
<dbReference type="PDB" id="7QJ5">
    <property type="method" value="EM"/>
    <property type="resolution" value="8.70 A"/>
    <property type="chains" value="1/2/O/P/Q/R/S/T/U/V/W/X/Y/Z=1-451"/>
</dbReference>
<dbReference type="PDB" id="7QJ6">
    <property type="method" value="EM"/>
    <property type="resolution" value="7.80 A"/>
    <property type="chains" value="Q/R/S/T/U/V/W/X/Y/Z=1-451"/>
</dbReference>
<dbReference type="PDB" id="7QJ7">
    <property type="method" value="EM"/>
    <property type="resolution" value="8.70 A"/>
    <property type="chains" value="O/P/Q/R/S/T/U/V/W/X/Y/Z=1-451"/>
</dbReference>
<dbReference type="PDB" id="7QJ8">
    <property type="method" value="EM"/>
    <property type="resolution" value="8.70 A"/>
    <property type="chains" value="1/2/Q/R/S/T/U/V/W/X/Y/Z=1-451"/>
</dbReference>
<dbReference type="PDB" id="7QJ9">
    <property type="method" value="EM"/>
    <property type="resolution" value="8.10 A"/>
    <property type="chains" value="Q/R/S/T/U/V/W/X/Y/Z=1-451"/>
</dbReference>
<dbReference type="PDB" id="7QJA">
    <property type="method" value="EM"/>
    <property type="resolution" value="9.20 A"/>
    <property type="chains" value="O/P/Q/R/S/T/U/V/W/X/Y/Z=1-451"/>
</dbReference>
<dbReference type="PDB" id="7QJB">
    <property type="method" value="EM"/>
    <property type="resolution" value="9.20 A"/>
    <property type="chains" value="1/2/Q/R/S/T/U/V/W/X/Y/Z=1-451"/>
</dbReference>
<dbReference type="PDB" id="7QJC">
    <property type="method" value="EM"/>
    <property type="resolution" value="16.10 A"/>
    <property type="chains" value="1/2/O/P/Q/R/S/T/U/V/W/X/Y/Z=1-451"/>
</dbReference>
<dbReference type="PDB" id="7QJD">
    <property type="method" value="EM"/>
    <property type="resolution" value="7.10 A"/>
    <property type="chains" value="1/2/O/P/Q/R/S/T/U/V/W/X/Y/Z=1-451"/>
</dbReference>
<dbReference type="PDB" id="7QJE">
    <property type="method" value="EM"/>
    <property type="resolution" value="7.80 A"/>
    <property type="chains" value="W/X/Y/Z=1-451"/>
</dbReference>
<dbReference type="PDB" id="8Q62">
    <property type="method" value="EM"/>
    <property type="resolution" value="3.72 A"/>
    <property type="chains" value="a/b/c/d/e/f/g/h/i/j/k/l/m/n=1-451"/>
</dbReference>
<dbReference type="PDB" id="8RX1">
    <property type="method" value="EM"/>
    <property type="resolution" value="3.57 A"/>
    <property type="chains" value="1/2/O/P/Q/R/S/T/U/V/W/X/Y/Z=1-451"/>
</dbReference>
<dbReference type="PDB" id="8VA2">
    <property type="method" value="EM"/>
    <property type="resolution" value="4.50 A"/>
    <property type="chains" value="g/h=1-441"/>
</dbReference>
<dbReference type="PDB" id="8VRD">
    <property type="method" value="EM"/>
    <property type="resolution" value="7.00 A"/>
    <property type="chains" value="a/b/c/d/e/f/g/h/i/j/k/l/m/n=1-451"/>
</dbReference>
<dbReference type="PDB" id="8VRJ">
    <property type="method" value="EM"/>
    <property type="resolution" value="7.70 A"/>
    <property type="chains" value="a/b/c/d/e/f/g/h/i/j/k/l/m/n=1-451"/>
</dbReference>
<dbReference type="PDB" id="8VRK">
    <property type="method" value="EM"/>
    <property type="resolution" value="8.50 A"/>
    <property type="chains" value="a/b/c/d/e/f/g/h/i/j/k/l/m/n=1-451"/>
</dbReference>
<dbReference type="PDB" id="9H9P">
    <property type="method" value="EM"/>
    <property type="resolution" value="4.50 A"/>
    <property type="chains" value="l/m=1-451"/>
</dbReference>
<dbReference type="PDBsum" id="1Z5V"/>
<dbReference type="PDBsum" id="1Z5W"/>
<dbReference type="PDBsum" id="3CB2"/>
<dbReference type="PDBsum" id="6V5V"/>
<dbReference type="PDBsum" id="6V6S"/>
<dbReference type="PDBsum" id="7AS4"/>
<dbReference type="PDBsum" id="7QJ0"/>
<dbReference type="PDBsum" id="7QJ1"/>
<dbReference type="PDBsum" id="7QJ2"/>
<dbReference type="PDBsum" id="7QJ3"/>
<dbReference type="PDBsum" id="7QJ4"/>
<dbReference type="PDBsum" id="7QJ5"/>
<dbReference type="PDBsum" id="7QJ6"/>
<dbReference type="PDBsum" id="7QJ7"/>
<dbReference type="PDBsum" id="7QJ8"/>
<dbReference type="PDBsum" id="7QJ9"/>
<dbReference type="PDBsum" id="7QJA"/>
<dbReference type="PDBsum" id="7QJB"/>
<dbReference type="PDBsum" id="7QJC"/>
<dbReference type="PDBsum" id="7QJD"/>
<dbReference type="PDBsum" id="7QJE"/>
<dbReference type="PDBsum" id="8Q62"/>
<dbReference type="PDBsum" id="8RX1"/>
<dbReference type="PDBsum" id="8VA2"/>
<dbReference type="PDBsum" id="8VRD"/>
<dbReference type="PDBsum" id="8VRJ"/>
<dbReference type="PDBsum" id="8VRK"/>
<dbReference type="PDBsum" id="9H9P"/>
<dbReference type="EMDB" id="EMD-11888"/>
<dbReference type="EMDB" id="EMD-14005"/>
<dbReference type="EMDB" id="EMD-14006"/>
<dbReference type="EMDB" id="EMD-14007"/>
<dbReference type="EMDB" id="EMD-14008"/>
<dbReference type="EMDB" id="EMD-14009"/>
<dbReference type="EMDB" id="EMD-14010"/>
<dbReference type="EMDB" id="EMD-14011"/>
<dbReference type="EMDB" id="EMD-14012"/>
<dbReference type="EMDB" id="EMD-14013"/>
<dbReference type="EMDB" id="EMD-14014"/>
<dbReference type="EMDB" id="EMD-14015"/>
<dbReference type="EMDB" id="EMD-14016"/>
<dbReference type="EMDB" id="EMD-14017"/>
<dbReference type="EMDB" id="EMD-14018"/>
<dbReference type="EMDB" id="EMD-14019"/>
<dbReference type="EMDB" id="EMD-18181"/>
<dbReference type="EMDB" id="EMD-18182"/>
<dbReference type="EMDB" id="EMD-18193"/>
<dbReference type="EMDB" id="EMD-19570"/>
<dbReference type="EMDB" id="EMD-21054"/>
<dbReference type="EMDB" id="EMD-21073"/>
<dbReference type="EMDB" id="EMD-43085"/>
<dbReference type="EMDB" id="EMD-43481"/>
<dbReference type="EMDB" id="EMD-43482"/>
<dbReference type="EMDB" id="EMD-43483"/>
<dbReference type="SMR" id="P23258"/>
<dbReference type="BioGRID" id="113134">
    <property type="interactions" value="389"/>
</dbReference>
<dbReference type="CORUM" id="P23258"/>
<dbReference type="DIP" id="DIP-29890N"/>
<dbReference type="FunCoup" id="P23258">
    <property type="interactions" value="3268"/>
</dbReference>
<dbReference type="IntAct" id="P23258">
    <property type="interactions" value="171"/>
</dbReference>
<dbReference type="MINT" id="P23258"/>
<dbReference type="STRING" id="9606.ENSP00000251413"/>
<dbReference type="DrugBank" id="DB00570">
    <property type="generic name" value="Vinblastine"/>
</dbReference>
<dbReference type="GlyGen" id="P23258">
    <property type="glycosylation" value="1 site, 1 O-linked glycan (1 site)"/>
</dbReference>
<dbReference type="iPTMnet" id="P23258"/>
<dbReference type="MetOSite" id="P23258"/>
<dbReference type="PhosphoSitePlus" id="P23258"/>
<dbReference type="BioMuta" id="TUBG1"/>
<dbReference type="DMDM" id="20455518"/>
<dbReference type="REPRODUCTION-2DPAGE" id="IPI00295081"/>
<dbReference type="jPOST" id="P23258"/>
<dbReference type="MassIVE" id="P23258"/>
<dbReference type="PaxDb" id="9606-ENSP00000251413"/>
<dbReference type="PeptideAtlas" id="P23258"/>
<dbReference type="ProteomicsDB" id="54075"/>
<dbReference type="Pumba" id="P23258"/>
<dbReference type="ABCD" id="P23258">
    <property type="antibodies" value="6 sequenced antibodies"/>
</dbReference>
<dbReference type="Antibodypedia" id="3898">
    <property type="antibodies" value="607 antibodies from 42 providers"/>
</dbReference>
<dbReference type="DNASU" id="7283"/>
<dbReference type="Ensembl" id="ENST00000251413.8">
    <property type="protein sequence ID" value="ENSP00000251413.2"/>
    <property type="gene ID" value="ENSG00000131462.9"/>
</dbReference>
<dbReference type="GeneID" id="7283"/>
<dbReference type="KEGG" id="hsa:7283"/>
<dbReference type="MANE-Select" id="ENST00000251413.8">
    <property type="protein sequence ID" value="ENSP00000251413.2"/>
    <property type="RefSeq nucleotide sequence ID" value="NM_001070.5"/>
    <property type="RefSeq protein sequence ID" value="NP_001061.2"/>
</dbReference>
<dbReference type="UCSC" id="uc002ian.4">
    <property type="organism name" value="human"/>
</dbReference>
<dbReference type="AGR" id="HGNC:12417"/>
<dbReference type="CTD" id="7283"/>
<dbReference type="DisGeNET" id="7283"/>
<dbReference type="GeneCards" id="TUBG1"/>
<dbReference type="HGNC" id="HGNC:12417">
    <property type="gene designation" value="TUBG1"/>
</dbReference>
<dbReference type="HPA" id="ENSG00000131462">
    <property type="expression patterns" value="Tissue enhanced (testis)"/>
</dbReference>
<dbReference type="MalaCards" id="TUBG1"/>
<dbReference type="MIM" id="191135">
    <property type="type" value="gene"/>
</dbReference>
<dbReference type="MIM" id="615412">
    <property type="type" value="phenotype"/>
</dbReference>
<dbReference type="neXtProt" id="NX_P23258"/>
<dbReference type="OpenTargets" id="ENSG00000131462"/>
<dbReference type="Orphanet" id="261183">
    <property type="disease" value="15q11.2 microdeletion syndrome"/>
</dbReference>
<dbReference type="PharmGKB" id="PA37079"/>
<dbReference type="VEuPathDB" id="HostDB:ENSG00000131462"/>
<dbReference type="eggNOG" id="KOG1374">
    <property type="taxonomic scope" value="Eukaryota"/>
</dbReference>
<dbReference type="GeneTree" id="ENSGT00940000156957"/>
<dbReference type="InParanoid" id="P23258"/>
<dbReference type="OMA" id="HRYISIL"/>
<dbReference type="OrthoDB" id="10249382at2759"/>
<dbReference type="PAN-GO" id="P23258">
    <property type="GO annotations" value="13 GO annotations based on evolutionary models"/>
</dbReference>
<dbReference type="PhylomeDB" id="P23258"/>
<dbReference type="TreeFam" id="TF300477"/>
<dbReference type="BRENDA" id="3.6.5.6">
    <property type="organism ID" value="2681"/>
</dbReference>
<dbReference type="PathwayCommons" id="P23258"/>
<dbReference type="Reactome" id="R-HSA-2565942">
    <property type="pathway name" value="Regulation of PLK1 Activity at G2/M Transition"/>
</dbReference>
<dbReference type="Reactome" id="R-HSA-380259">
    <property type="pathway name" value="Loss of Nlp from mitotic centrosomes"/>
</dbReference>
<dbReference type="Reactome" id="R-HSA-380270">
    <property type="pathway name" value="Recruitment of mitotic centrosome proteins and complexes"/>
</dbReference>
<dbReference type="Reactome" id="R-HSA-380284">
    <property type="pathway name" value="Loss of proteins required for interphase microtubule organization from the centrosome"/>
</dbReference>
<dbReference type="Reactome" id="R-HSA-380320">
    <property type="pathway name" value="Recruitment of NuMA to mitotic centrosomes"/>
</dbReference>
<dbReference type="Reactome" id="R-HSA-5620912">
    <property type="pathway name" value="Anchoring of the basal body to the plasma membrane"/>
</dbReference>
<dbReference type="Reactome" id="R-HSA-8854518">
    <property type="pathway name" value="AURKA Activation by TPX2"/>
</dbReference>
<dbReference type="SignaLink" id="P23258"/>
<dbReference type="SIGNOR" id="P23258"/>
<dbReference type="BioGRID-ORCS" id="7283">
    <property type="hits" value="818 hits in 1174 CRISPR screens"/>
</dbReference>
<dbReference type="CD-CODE" id="8C2F96ED">
    <property type="entry name" value="Centrosome"/>
</dbReference>
<dbReference type="CD-CODE" id="91857CE7">
    <property type="entry name" value="Nucleolus"/>
</dbReference>
<dbReference type="CD-CODE" id="FB4E32DD">
    <property type="entry name" value="Presynaptic clusters and postsynaptic densities"/>
</dbReference>
<dbReference type="ChiTaRS" id="TUBG1">
    <property type="organism name" value="human"/>
</dbReference>
<dbReference type="EvolutionaryTrace" id="P23258"/>
<dbReference type="GeneWiki" id="TUBG1"/>
<dbReference type="GenomeRNAi" id="7283"/>
<dbReference type="Pharos" id="P23258">
    <property type="development level" value="Tbio"/>
</dbReference>
<dbReference type="PRO" id="PR:P23258"/>
<dbReference type="Proteomes" id="UP000005640">
    <property type="component" value="Chromosome 17"/>
</dbReference>
<dbReference type="RNAct" id="P23258">
    <property type="molecule type" value="protein"/>
</dbReference>
<dbReference type="Bgee" id="ENSG00000131462">
    <property type="expression patterns" value="Expressed in right testis and 208 other cell types or tissues"/>
</dbReference>
<dbReference type="ExpressionAtlas" id="P23258">
    <property type="expression patterns" value="baseline and differential"/>
</dbReference>
<dbReference type="GO" id="GO:0045177">
    <property type="term" value="C:apical part of cell"/>
    <property type="evidence" value="ECO:0007669"/>
    <property type="project" value="Ensembl"/>
</dbReference>
<dbReference type="GO" id="GO:0031252">
    <property type="term" value="C:cell leading edge"/>
    <property type="evidence" value="ECO:0007669"/>
    <property type="project" value="Ensembl"/>
</dbReference>
<dbReference type="GO" id="GO:0005814">
    <property type="term" value="C:centriole"/>
    <property type="evidence" value="ECO:0007669"/>
    <property type="project" value="Ensembl"/>
</dbReference>
<dbReference type="GO" id="GO:0005813">
    <property type="term" value="C:centrosome"/>
    <property type="evidence" value="ECO:0000314"/>
    <property type="project" value="UniProtKB"/>
</dbReference>
<dbReference type="GO" id="GO:0036064">
    <property type="term" value="C:ciliary basal body"/>
    <property type="evidence" value="ECO:0007669"/>
    <property type="project" value="Ensembl"/>
</dbReference>
<dbReference type="GO" id="GO:0000794">
    <property type="term" value="C:condensed nuclear chromosome"/>
    <property type="evidence" value="ECO:0000250"/>
    <property type="project" value="UniProtKB"/>
</dbReference>
<dbReference type="GO" id="GO:0005737">
    <property type="term" value="C:cytoplasm"/>
    <property type="evidence" value="ECO:0000314"/>
    <property type="project" value="UniProtKB"/>
</dbReference>
<dbReference type="GO" id="GO:0005881">
    <property type="term" value="C:cytoplasmic microtubule"/>
    <property type="evidence" value="ECO:0007669"/>
    <property type="project" value="Ensembl"/>
</dbReference>
<dbReference type="GO" id="GO:0005829">
    <property type="term" value="C:cytosol"/>
    <property type="evidence" value="ECO:0000304"/>
    <property type="project" value="Reactome"/>
</dbReference>
<dbReference type="GO" id="GO:0000930">
    <property type="term" value="C:gamma-tubulin complex"/>
    <property type="evidence" value="ECO:0000304"/>
    <property type="project" value="UniProtKB"/>
</dbReference>
<dbReference type="GO" id="GO:0000931">
    <property type="term" value="C:gamma-tubulin ring complex"/>
    <property type="evidence" value="ECO:0000318"/>
    <property type="project" value="GO_Central"/>
</dbReference>
<dbReference type="GO" id="GO:1990498">
    <property type="term" value="C:mitotic spindle microtubule"/>
    <property type="evidence" value="ECO:0000314"/>
    <property type="project" value="UniProtKB"/>
</dbReference>
<dbReference type="GO" id="GO:0043005">
    <property type="term" value="C:neuron projection"/>
    <property type="evidence" value="ECO:0007669"/>
    <property type="project" value="Ensembl"/>
</dbReference>
<dbReference type="GO" id="GO:0097730">
    <property type="term" value="C:non-motile cilium"/>
    <property type="evidence" value="ECO:0007669"/>
    <property type="project" value="Ensembl"/>
</dbReference>
<dbReference type="GO" id="GO:0005634">
    <property type="term" value="C:nucleus"/>
    <property type="evidence" value="ECO:0000318"/>
    <property type="project" value="GO_Central"/>
</dbReference>
<dbReference type="GO" id="GO:0000242">
    <property type="term" value="C:pericentriolar material"/>
    <property type="evidence" value="ECO:0007669"/>
    <property type="project" value="Ensembl"/>
</dbReference>
<dbReference type="GO" id="GO:0005827">
    <property type="term" value="C:polar microtubule"/>
    <property type="evidence" value="ECO:0000314"/>
    <property type="project" value="UniProtKB"/>
</dbReference>
<dbReference type="GO" id="GO:0055037">
    <property type="term" value="C:recycling endosome"/>
    <property type="evidence" value="ECO:0000314"/>
    <property type="project" value="UniProtKB"/>
</dbReference>
<dbReference type="GO" id="GO:0005819">
    <property type="term" value="C:spindle"/>
    <property type="evidence" value="ECO:0000318"/>
    <property type="project" value="GO_Central"/>
</dbReference>
<dbReference type="GO" id="GO:0005525">
    <property type="term" value="F:GTP binding"/>
    <property type="evidence" value="ECO:0000318"/>
    <property type="project" value="GO_Central"/>
</dbReference>
<dbReference type="GO" id="GO:0042802">
    <property type="term" value="F:identical protein binding"/>
    <property type="evidence" value="ECO:0000353"/>
    <property type="project" value="IntAct"/>
</dbReference>
<dbReference type="GO" id="GO:0140490">
    <property type="term" value="F:microtubule nucleator activity"/>
    <property type="evidence" value="ECO:0000318"/>
    <property type="project" value="GO_Central"/>
</dbReference>
<dbReference type="GO" id="GO:0005200">
    <property type="term" value="F:structural constituent of cytoskeleton"/>
    <property type="evidence" value="ECO:0000304"/>
    <property type="project" value="ProtInc"/>
</dbReference>
<dbReference type="GO" id="GO:0031122">
    <property type="term" value="P:cytoplasmic microtubule organization"/>
    <property type="evidence" value="ECO:0007669"/>
    <property type="project" value="InterPro"/>
</dbReference>
<dbReference type="GO" id="GO:0000212">
    <property type="term" value="P:meiotic spindle organization"/>
    <property type="evidence" value="ECO:0000250"/>
    <property type="project" value="UniProtKB"/>
</dbReference>
<dbReference type="GO" id="GO:0000226">
    <property type="term" value="P:microtubule cytoskeleton organization"/>
    <property type="evidence" value="ECO:0000304"/>
    <property type="project" value="ProtInc"/>
</dbReference>
<dbReference type="GO" id="GO:0007020">
    <property type="term" value="P:microtubule nucleation"/>
    <property type="evidence" value="ECO:0000318"/>
    <property type="project" value="GO_Central"/>
</dbReference>
<dbReference type="GO" id="GO:0000278">
    <property type="term" value="P:mitotic cell cycle"/>
    <property type="evidence" value="ECO:0000318"/>
    <property type="project" value="GO_Central"/>
</dbReference>
<dbReference type="GO" id="GO:0000070">
    <property type="term" value="P:mitotic sister chromatid segregation"/>
    <property type="evidence" value="ECO:0000318"/>
    <property type="project" value="GO_Central"/>
</dbReference>
<dbReference type="GO" id="GO:0007052">
    <property type="term" value="P:mitotic spindle organization"/>
    <property type="evidence" value="ECO:0000318"/>
    <property type="project" value="GO_Central"/>
</dbReference>
<dbReference type="CDD" id="cd02188">
    <property type="entry name" value="gamma_tubulin"/>
    <property type="match status" value="1"/>
</dbReference>
<dbReference type="FunFam" id="1.10.287.600:FF:000004">
    <property type="entry name" value="Tubulin gamma chain"/>
    <property type="match status" value="1"/>
</dbReference>
<dbReference type="FunFam" id="3.30.1330.20:FF:000003">
    <property type="entry name" value="Tubulin gamma chain"/>
    <property type="match status" value="1"/>
</dbReference>
<dbReference type="FunFam" id="3.40.50.1440:FF:000010">
    <property type="entry name" value="Tubulin gamma chain"/>
    <property type="match status" value="1"/>
</dbReference>
<dbReference type="Gene3D" id="1.10.287.600">
    <property type="entry name" value="Helix hairpin bin"/>
    <property type="match status" value="1"/>
</dbReference>
<dbReference type="Gene3D" id="3.30.1330.20">
    <property type="entry name" value="Tubulin/FtsZ, C-terminal domain"/>
    <property type="match status" value="1"/>
</dbReference>
<dbReference type="Gene3D" id="3.40.50.1440">
    <property type="entry name" value="Tubulin/FtsZ, GTPase domain"/>
    <property type="match status" value="1"/>
</dbReference>
<dbReference type="InterPro" id="IPR002454">
    <property type="entry name" value="Gamma_tubulin"/>
</dbReference>
<dbReference type="InterPro" id="IPR008280">
    <property type="entry name" value="Tub_FtsZ_C"/>
</dbReference>
<dbReference type="InterPro" id="IPR000217">
    <property type="entry name" value="Tubulin"/>
</dbReference>
<dbReference type="InterPro" id="IPR037103">
    <property type="entry name" value="Tubulin/FtsZ-like_C"/>
</dbReference>
<dbReference type="InterPro" id="IPR018316">
    <property type="entry name" value="Tubulin/FtsZ_2-layer-sand-dom"/>
</dbReference>
<dbReference type="InterPro" id="IPR036525">
    <property type="entry name" value="Tubulin/FtsZ_GTPase_sf"/>
</dbReference>
<dbReference type="InterPro" id="IPR023123">
    <property type="entry name" value="Tubulin_C"/>
</dbReference>
<dbReference type="InterPro" id="IPR017975">
    <property type="entry name" value="Tubulin_CS"/>
</dbReference>
<dbReference type="InterPro" id="IPR003008">
    <property type="entry name" value="Tubulin_FtsZ_GTPase"/>
</dbReference>
<dbReference type="PANTHER" id="PTHR11588">
    <property type="entry name" value="TUBULIN"/>
    <property type="match status" value="1"/>
</dbReference>
<dbReference type="Pfam" id="PF00091">
    <property type="entry name" value="Tubulin"/>
    <property type="match status" value="1"/>
</dbReference>
<dbReference type="Pfam" id="PF03953">
    <property type="entry name" value="Tubulin_C"/>
    <property type="match status" value="1"/>
</dbReference>
<dbReference type="PRINTS" id="PR01164">
    <property type="entry name" value="GAMMATUBULIN"/>
</dbReference>
<dbReference type="PRINTS" id="PR01161">
    <property type="entry name" value="TUBULIN"/>
</dbReference>
<dbReference type="SMART" id="SM00864">
    <property type="entry name" value="Tubulin"/>
    <property type="match status" value="1"/>
</dbReference>
<dbReference type="SMART" id="SM00865">
    <property type="entry name" value="Tubulin_C"/>
    <property type="match status" value="1"/>
</dbReference>
<dbReference type="SUPFAM" id="SSF55307">
    <property type="entry name" value="Tubulin C-terminal domain-like"/>
    <property type="match status" value="1"/>
</dbReference>
<dbReference type="SUPFAM" id="SSF52490">
    <property type="entry name" value="Tubulin nucleotide-binding domain-like"/>
    <property type="match status" value="1"/>
</dbReference>
<dbReference type="PROSITE" id="PS00227">
    <property type="entry name" value="TUBULIN"/>
    <property type="match status" value="1"/>
</dbReference>